<dbReference type="EMBL" id="CP000901">
    <property type="protein sequence ID" value="ABX87465.1"/>
    <property type="molecule type" value="Genomic_DNA"/>
</dbReference>
<dbReference type="RefSeq" id="WP_002209209.1">
    <property type="nucleotide sequence ID" value="NZ_CP009935.1"/>
</dbReference>
<dbReference type="SMR" id="A9R055"/>
<dbReference type="GeneID" id="57974180"/>
<dbReference type="KEGG" id="ypg:YpAngola_A0837"/>
<dbReference type="PATRIC" id="fig|349746.12.peg.1789"/>
<dbReference type="GO" id="GO:0005829">
    <property type="term" value="C:cytosol"/>
    <property type="evidence" value="ECO:0007669"/>
    <property type="project" value="TreeGrafter"/>
</dbReference>
<dbReference type="GO" id="GO:0005525">
    <property type="term" value="F:GTP binding"/>
    <property type="evidence" value="ECO:0007669"/>
    <property type="project" value="UniProtKB-UniRule"/>
</dbReference>
<dbReference type="GO" id="GO:0003924">
    <property type="term" value="F:GTPase activity"/>
    <property type="evidence" value="ECO:0007669"/>
    <property type="project" value="InterPro"/>
</dbReference>
<dbReference type="GO" id="GO:0097216">
    <property type="term" value="F:guanosine tetraphosphate binding"/>
    <property type="evidence" value="ECO:0007669"/>
    <property type="project" value="UniProtKB-ARBA"/>
</dbReference>
<dbReference type="GO" id="GO:0016150">
    <property type="term" value="F:translation release factor activity, codon nonspecific"/>
    <property type="evidence" value="ECO:0007669"/>
    <property type="project" value="TreeGrafter"/>
</dbReference>
<dbReference type="GO" id="GO:0016149">
    <property type="term" value="F:translation release factor activity, codon specific"/>
    <property type="evidence" value="ECO:0007669"/>
    <property type="project" value="UniProtKB-UniRule"/>
</dbReference>
<dbReference type="GO" id="GO:0006449">
    <property type="term" value="P:regulation of translational termination"/>
    <property type="evidence" value="ECO:0007669"/>
    <property type="project" value="UniProtKB-UniRule"/>
</dbReference>
<dbReference type="CDD" id="cd04169">
    <property type="entry name" value="RF3"/>
    <property type="match status" value="1"/>
</dbReference>
<dbReference type="CDD" id="cd03689">
    <property type="entry name" value="RF3_II"/>
    <property type="match status" value="1"/>
</dbReference>
<dbReference type="CDD" id="cd16259">
    <property type="entry name" value="RF3_III"/>
    <property type="match status" value="1"/>
</dbReference>
<dbReference type="FunFam" id="2.40.30.10:FF:000040">
    <property type="entry name" value="Peptide chain release factor 3"/>
    <property type="match status" value="1"/>
</dbReference>
<dbReference type="FunFam" id="3.30.70.3280:FF:000001">
    <property type="entry name" value="Peptide chain release factor 3"/>
    <property type="match status" value="1"/>
</dbReference>
<dbReference type="FunFam" id="3.40.50.300:FF:000542">
    <property type="entry name" value="Peptide chain release factor 3"/>
    <property type="match status" value="1"/>
</dbReference>
<dbReference type="Gene3D" id="3.40.50.300">
    <property type="entry name" value="P-loop containing nucleotide triphosphate hydrolases"/>
    <property type="match status" value="2"/>
</dbReference>
<dbReference type="Gene3D" id="3.30.70.3280">
    <property type="entry name" value="Peptide chain release factor 3, domain III"/>
    <property type="match status" value="1"/>
</dbReference>
<dbReference type="HAMAP" id="MF_00072">
    <property type="entry name" value="Rel_fac_3"/>
    <property type="match status" value="1"/>
</dbReference>
<dbReference type="InterPro" id="IPR053905">
    <property type="entry name" value="EF-G-like_DII"/>
</dbReference>
<dbReference type="InterPro" id="IPR035647">
    <property type="entry name" value="EFG_III/V"/>
</dbReference>
<dbReference type="InterPro" id="IPR031157">
    <property type="entry name" value="G_TR_CS"/>
</dbReference>
<dbReference type="InterPro" id="IPR027417">
    <property type="entry name" value="P-loop_NTPase"/>
</dbReference>
<dbReference type="InterPro" id="IPR004548">
    <property type="entry name" value="PrfC"/>
</dbReference>
<dbReference type="InterPro" id="IPR032090">
    <property type="entry name" value="RF3_C"/>
</dbReference>
<dbReference type="InterPro" id="IPR038467">
    <property type="entry name" value="RF3_dom_3_sf"/>
</dbReference>
<dbReference type="InterPro" id="IPR041732">
    <property type="entry name" value="RF3_GTP-bd"/>
</dbReference>
<dbReference type="InterPro" id="IPR005225">
    <property type="entry name" value="Small_GTP-bd"/>
</dbReference>
<dbReference type="InterPro" id="IPR000795">
    <property type="entry name" value="T_Tr_GTP-bd_dom"/>
</dbReference>
<dbReference type="InterPro" id="IPR009000">
    <property type="entry name" value="Transl_B-barrel_sf"/>
</dbReference>
<dbReference type="NCBIfam" id="TIGR00503">
    <property type="entry name" value="prfC"/>
    <property type="match status" value="1"/>
</dbReference>
<dbReference type="NCBIfam" id="NF001964">
    <property type="entry name" value="PRK00741.1"/>
    <property type="match status" value="1"/>
</dbReference>
<dbReference type="NCBIfam" id="TIGR00231">
    <property type="entry name" value="small_GTP"/>
    <property type="match status" value="1"/>
</dbReference>
<dbReference type="PANTHER" id="PTHR43556">
    <property type="entry name" value="PEPTIDE CHAIN RELEASE FACTOR RF3"/>
    <property type="match status" value="1"/>
</dbReference>
<dbReference type="PANTHER" id="PTHR43556:SF2">
    <property type="entry name" value="PEPTIDE CHAIN RELEASE FACTOR RF3"/>
    <property type="match status" value="1"/>
</dbReference>
<dbReference type="Pfam" id="PF22042">
    <property type="entry name" value="EF-G_D2"/>
    <property type="match status" value="1"/>
</dbReference>
<dbReference type="Pfam" id="PF00009">
    <property type="entry name" value="GTP_EFTU"/>
    <property type="match status" value="1"/>
</dbReference>
<dbReference type="Pfam" id="PF16658">
    <property type="entry name" value="RF3_C"/>
    <property type="match status" value="1"/>
</dbReference>
<dbReference type="PRINTS" id="PR00315">
    <property type="entry name" value="ELONGATNFCT"/>
</dbReference>
<dbReference type="SUPFAM" id="SSF54980">
    <property type="entry name" value="EF-G C-terminal domain-like"/>
    <property type="match status" value="1"/>
</dbReference>
<dbReference type="SUPFAM" id="SSF52540">
    <property type="entry name" value="P-loop containing nucleoside triphosphate hydrolases"/>
    <property type="match status" value="1"/>
</dbReference>
<dbReference type="SUPFAM" id="SSF50447">
    <property type="entry name" value="Translation proteins"/>
    <property type="match status" value="1"/>
</dbReference>
<dbReference type="PROSITE" id="PS00301">
    <property type="entry name" value="G_TR_1"/>
    <property type="match status" value="1"/>
</dbReference>
<dbReference type="PROSITE" id="PS51722">
    <property type="entry name" value="G_TR_2"/>
    <property type="match status" value="1"/>
</dbReference>
<comment type="function">
    <text evidence="1">Increases the formation of ribosomal termination complexes and stimulates activities of RF-1 and RF-2. It binds guanine nucleotides and has strong preference for UGA stop codons. It may interact directly with the ribosome. The stimulation of RF-1 and RF-2 is significantly reduced by GTP and GDP, but not by GMP.</text>
</comment>
<comment type="subcellular location">
    <subcellularLocation>
        <location evidence="1">Cytoplasm</location>
    </subcellularLocation>
</comment>
<comment type="similarity">
    <text evidence="1">Belongs to the TRAFAC class translation factor GTPase superfamily. Classic translation factor GTPase family. PrfC subfamily.</text>
</comment>
<name>RF3_YERPG</name>
<gene>
    <name evidence="1" type="primary">prfC</name>
    <name type="ordered locus">YpAngola_A0837</name>
</gene>
<sequence>MSPSEYALEVAKRRTFAIISHPDAGKTTITEKVLLFGHAIQTAGTVKGRGSSHHAKSDWMEMEKQRGISITTSVMQFPYGGCLVNLLDTPGHEDFSEDTYRTLTAVDCCLMVIDAAKGVEDRTRKLMEVTRLRDTPILTFMNKLDREIRDPMEVLDEVERELNIACSPITWPIGCGKSFKGVYHLHKDETYLYQSGKGHTIQEVRIVKGLNNPDLDVAVGEDLAKQFRQELELVQGASHEFDHEAFLSGDLTPVFFGTALGNFGVDHMLDGLVEWAPAPMPRKTDTRVVVASEEKFTGFVFKIQANMDPKHRDRVAFMRVVSGRFEKGMKLRQVRTKKDVVISDALTFMAGDRSHVEEAYAGDIIGLHNHGTIQIGDTFTQGEDMKFTGIPNFAPELFRRIRLRDPLKQKQLLKGLVQLSEEGAVQVFRPLSNNDLIVGAVGVLQFEVVSSRLKSEYNVEAVYESVNVSTARWVECHDVKKFEEFKRKNELNLALDGGDNLSYIAPTMVNLNITQERYPDVIFRKTREH</sequence>
<accession>A9R055</accession>
<keyword id="KW-0963">Cytoplasm</keyword>
<keyword id="KW-0342">GTP-binding</keyword>
<keyword id="KW-0547">Nucleotide-binding</keyword>
<keyword id="KW-0648">Protein biosynthesis</keyword>
<reference key="1">
    <citation type="journal article" date="2010" name="J. Bacteriol.">
        <title>Genome sequence of the deep-rooted Yersinia pestis strain Angola reveals new insights into the evolution and pangenome of the plague bacterium.</title>
        <authorList>
            <person name="Eppinger M."/>
            <person name="Worsham P.L."/>
            <person name="Nikolich M.P."/>
            <person name="Riley D.R."/>
            <person name="Sebastian Y."/>
            <person name="Mou S."/>
            <person name="Achtman M."/>
            <person name="Lindler L.E."/>
            <person name="Ravel J."/>
        </authorList>
    </citation>
    <scope>NUCLEOTIDE SEQUENCE [LARGE SCALE GENOMIC DNA]</scope>
    <source>
        <strain>Angola</strain>
    </source>
</reference>
<organism>
    <name type="scientific">Yersinia pestis bv. Antiqua (strain Angola)</name>
    <dbReference type="NCBI Taxonomy" id="349746"/>
    <lineage>
        <taxon>Bacteria</taxon>
        <taxon>Pseudomonadati</taxon>
        <taxon>Pseudomonadota</taxon>
        <taxon>Gammaproteobacteria</taxon>
        <taxon>Enterobacterales</taxon>
        <taxon>Yersiniaceae</taxon>
        <taxon>Yersinia</taxon>
    </lineage>
</organism>
<proteinExistence type="inferred from homology"/>
<evidence type="ECO:0000255" key="1">
    <source>
        <dbReference type="HAMAP-Rule" id="MF_00072"/>
    </source>
</evidence>
<feature type="chain" id="PRO_1000092515" description="Peptide chain release factor 3">
    <location>
        <begin position="1"/>
        <end position="529"/>
    </location>
</feature>
<feature type="domain" description="tr-type G">
    <location>
        <begin position="11"/>
        <end position="280"/>
    </location>
</feature>
<feature type="binding site" evidence="1">
    <location>
        <begin position="20"/>
        <end position="27"/>
    </location>
    <ligand>
        <name>GTP</name>
        <dbReference type="ChEBI" id="CHEBI:37565"/>
    </ligand>
</feature>
<feature type="binding site" evidence="1">
    <location>
        <begin position="88"/>
        <end position="92"/>
    </location>
    <ligand>
        <name>GTP</name>
        <dbReference type="ChEBI" id="CHEBI:37565"/>
    </ligand>
</feature>
<feature type="binding site" evidence="1">
    <location>
        <begin position="142"/>
        <end position="145"/>
    </location>
    <ligand>
        <name>GTP</name>
        <dbReference type="ChEBI" id="CHEBI:37565"/>
    </ligand>
</feature>
<protein>
    <recommendedName>
        <fullName evidence="1">Peptide chain release factor 3</fullName>
        <shortName evidence="1">RF-3</shortName>
    </recommendedName>
</protein>